<proteinExistence type="evidence at protein level"/>
<reference key="1">
    <citation type="journal article" date="2001" name="Nature">
        <title>Genome sequence and gene compaction of the eukaryote parasite Encephalitozoon cuniculi.</title>
        <authorList>
            <person name="Katinka M.D."/>
            <person name="Duprat S."/>
            <person name="Cornillot E."/>
            <person name="Metenier G."/>
            <person name="Thomarat F."/>
            <person name="Prensier G."/>
            <person name="Barbe V."/>
            <person name="Peyretaillade E."/>
            <person name="Brottier P."/>
            <person name="Wincker P."/>
            <person name="Delbac F."/>
            <person name="El Alaoui H."/>
            <person name="Peyret P."/>
            <person name="Saurin W."/>
            <person name="Gouy M."/>
            <person name="Weissenbach J."/>
            <person name="Vivares C.P."/>
        </authorList>
    </citation>
    <scope>NUCLEOTIDE SEQUENCE [LARGE SCALE GENOMIC DNA]</scope>
    <source>
        <strain>GB-M1</strain>
    </source>
</reference>
<reference key="2">
    <citation type="journal article" date="2006" name="Proteomics">
        <title>Proteomic analysis of the eukaryotic parasite Encephalitozoon cuniculi (microsporidia): a reference map for proteins expressed in late sporogonial stages.</title>
        <authorList>
            <person name="Brosson D."/>
            <person name="Kuhn L."/>
            <person name="Delbac F."/>
            <person name="Garin J."/>
            <person name="Vivares C.P."/>
            <person name="Texier C."/>
        </authorList>
    </citation>
    <scope>IDENTIFICATION BY MASS SPECTROMETRY [LARGE SCALE ANALYSIS]</scope>
    <scope>DEVELOPMENTAL STAGE</scope>
</reference>
<sequence>MKIEASALRQLGIKQIEERAAEIKAELAALRQKKNSGDVGANDIKTAKKNLARALTVRREKILEELVEAYRGTPVSKLPKELRPKLNRSKRRALTKTQLRRKTRRQRARMSKFPRVIFAYNE</sequence>
<comment type="subunit">
    <text evidence="1">Component of the large ribosomal subunit.</text>
</comment>
<comment type="subcellular location">
    <subcellularLocation>
        <location evidence="1">Cytoplasm</location>
    </subcellularLocation>
</comment>
<comment type="developmental stage">
    <text evidence="3">Expressed in late sporogonial stages.</text>
</comment>
<comment type="similarity">
    <text evidence="4">Belongs to the universal ribosomal protein uL29 family.</text>
</comment>
<organism>
    <name type="scientific">Encephalitozoon cuniculi (strain GB-M1)</name>
    <name type="common">Microsporidian parasite</name>
    <dbReference type="NCBI Taxonomy" id="284813"/>
    <lineage>
        <taxon>Eukaryota</taxon>
        <taxon>Fungi</taxon>
        <taxon>Fungi incertae sedis</taxon>
        <taxon>Microsporidia</taxon>
        <taxon>Unikaryonidae</taxon>
        <taxon>Encephalitozoon</taxon>
    </lineage>
</organism>
<name>RL352_ENCCU</name>
<feature type="chain" id="PRO_0000383127" description="Large ribosomal subunit protein uL29B">
    <location>
        <begin position="1"/>
        <end position="122"/>
    </location>
</feature>
<feature type="coiled-coil region" evidence="2">
    <location>
        <begin position="10"/>
        <end position="69"/>
    </location>
</feature>
<accession>Q8SQQ7</accession>
<gene>
    <name type="primary">RPL35C</name>
    <name type="ordered locus">ECU11_2060</name>
</gene>
<dbReference type="EMBL" id="AL590450">
    <property type="protein sequence ID" value="CAD26116.1"/>
    <property type="molecule type" value="Genomic_DNA"/>
</dbReference>
<dbReference type="RefSeq" id="NP_586512.1">
    <property type="nucleotide sequence ID" value="NM_001042345.1"/>
</dbReference>
<dbReference type="SMR" id="Q8SQQ7"/>
<dbReference type="FunCoup" id="Q8SQQ7">
    <property type="interactions" value="163"/>
</dbReference>
<dbReference type="STRING" id="284813.Q8SQQ7"/>
<dbReference type="GeneID" id="860166"/>
<dbReference type="KEGG" id="ecu:ECU11_2060"/>
<dbReference type="VEuPathDB" id="MicrosporidiaDB:ECU11_2060"/>
<dbReference type="HOGENOM" id="CLU_110381_3_0_1"/>
<dbReference type="InParanoid" id="Q8SQQ7"/>
<dbReference type="OMA" id="RKCRNGK"/>
<dbReference type="OrthoDB" id="528635at2759"/>
<dbReference type="Proteomes" id="UP000000819">
    <property type="component" value="Chromosome XI"/>
</dbReference>
<dbReference type="GO" id="GO:0022625">
    <property type="term" value="C:cytosolic large ribosomal subunit"/>
    <property type="evidence" value="ECO:0007669"/>
    <property type="project" value="InterPro"/>
</dbReference>
<dbReference type="GO" id="GO:0003729">
    <property type="term" value="F:mRNA binding"/>
    <property type="evidence" value="ECO:0007669"/>
    <property type="project" value="TreeGrafter"/>
</dbReference>
<dbReference type="GO" id="GO:0003735">
    <property type="term" value="F:structural constituent of ribosome"/>
    <property type="evidence" value="ECO:0007669"/>
    <property type="project" value="InterPro"/>
</dbReference>
<dbReference type="GO" id="GO:0000463">
    <property type="term" value="P:maturation of LSU-rRNA from tricistronic rRNA transcript (SSU-rRNA, 5.8S rRNA, LSU-rRNA)"/>
    <property type="evidence" value="ECO:0007669"/>
    <property type="project" value="InterPro"/>
</dbReference>
<dbReference type="GO" id="GO:0006412">
    <property type="term" value="P:translation"/>
    <property type="evidence" value="ECO:0007669"/>
    <property type="project" value="InterPro"/>
</dbReference>
<dbReference type="Gene3D" id="1.10.287.310">
    <property type="match status" value="1"/>
</dbReference>
<dbReference type="Gene3D" id="6.10.250.3450">
    <property type="match status" value="1"/>
</dbReference>
<dbReference type="HAMAP" id="MF_00374">
    <property type="entry name" value="Ribosomal_uL29"/>
    <property type="match status" value="1"/>
</dbReference>
<dbReference type="InterPro" id="IPR001854">
    <property type="entry name" value="Ribosomal_uL29"/>
</dbReference>
<dbReference type="InterPro" id="IPR045059">
    <property type="entry name" value="Ribosomal_uL29_euk"/>
</dbReference>
<dbReference type="InterPro" id="IPR036049">
    <property type="entry name" value="Ribosomal_uL29_sf"/>
</dbReference>
<dbReference type="NCBIfam" id="TIGR00012">
    <property type="entry name" value="L29"/>
    <property type="match status" value="1"/>
</dbReference>
<dbReference type="PANTHER" id="PTHR45722">
    <property type="entry name" value="60S RIBOSOMAL PROTEIN L35"/>
    <property type="match status" value="1"/>
</dbReference>
<dbReference type="PANTHER" id="PTHR45722:SF2">
    <property type="entry name" value="LARGE RIBOSOMAL SUBUNIT PROTEIN UL29-RELATED"/>
    <property type="match status" value="1"/>
</dbReference>
<dbReference type="Pfam" id="PF00831">
    <property type="entry name" value="Ribosomal_L29"/>
    <property type="match status" value="1"/>
</dbReference>
<dbReference type="SUPFAM" id="SSF46561">
    <property type="entry name" value="Ribosomal protein L29 (L29p)"/>
    <property type="match status" value="1"/>
</dbReference>
<keyword id="KW-0175">Coiled coil</keyword>
<keyword id="KW-0963">Cytoplasm</keyword>
<keyword id="KW-1185">Reference proteome</keyword>
<keyword id="KW-0687">Ribonucleoprotein</keyword>
<keyword id="KW-0689">Ribosomal protein</keyword>
<protein>
    <recommendedName>
        <fullName evidence="4">Large ribosomal subunit protein uL29B</fullName>
    </recommendedName>
    <alternativeName>
        <fullName>60S ribosomal protein L35-2</fullName>
    </alternativeName>
</protein>
<evidence type="ECO:0000250" key="1"/>
<evidence type="ECO:0000255" key="2"/>
<evidence type="ECO:0000269" key="3">
    <source>
    </source>
</evidence>
<evidence type="ECO:0000305" key="4"/>